<comment type="function">
    <text evidence="1">Endonuclease that specifically degrades the RNA of RNA-DNA hybrids.</text>
</comment>
<comment type="catalytic activity">
    <reaction evidence="1">
        <text>Endonucleolytic cleavage to 5'-phosphomonoester.</text>
        <dbReference type="EC" id="3.1.26.4"/>
    </reaction>
</comment>
<comment type="cofactor">
    <cofactor evidence="1">
        <name>Mn(2+)</name>
        <dbReference type="ChEBI" id="CHEBI:29035"/>
    </cofactor>
    <cofactor evidence="1">
        <name>Mg(2+)</name>
        <dbReference type="ChEBI" id="CHEBI:18420"/>
    </cofactor>
    <text evidence="1">Manganese or magnesium. Binds 1 divalent metal ion per monomer in the absence of substrate. May bind a second metal ion after substrate binding.</text>
</comment>
<comment type="subcellular location">
    <subcellularLocation>
        <location evidence="1">Cytoplasm</location>
    </subcellularLocation>
</comment>
<comment type="similarity">
    <text evidence="1">Belongs to the RNase HII family. RnhC subfamily.</text>
</comment>
<sequence>MSNSIVIQTNSTVIEDMKQQYKHSLSPKTPQGGIFMAKVPSCTITAYKSGKVMFQGGRAEAEAARWQTVPQTPKIAVKKSVDSHRYAPPASIGTMSIVGSDEVGTGDFFGPMTVVAVYVDAKQIPLLKELGVKDSKNLNDEQITAIAKQLLHVVPYSSLVLHNEKYNELFDKGNNQGKLKALLHNKAITNLLAKIAPTKPEGVLIDQFTQPDTYYKYLAKQKQVQRENVYFATKGESVHLAVAAASILARYSFVKQFNELSKKAGMPLPKGAGKQVDIAAAKLIQKLGKERLPEFVKLHFANTEKAFRLLK</sequence>
<dbReference type="EC" id="3.1.26.4" evidence="1"/>
<dbReference type="EMBL" id="CP001215">
    <property type="protein sequence ID" value="ACP14857.1"/>
    <property type="molecule type" value="Genomic_DNA"/>
</dbReference>
<dbReference type="RefSeq" id="WP_000071578.1">
    <property type="nucleotide sequence ID" value="NC_012581.1"/>
</dbReference>
<dbReference type="SMR" id="C3L8T2"/>
<dbReference type="GeneID" id="45024427"/>
<dbReference type="KEGG" id="bah:BAMEG_4828"/>
<dbReference type="HOGENOM" id="CLU_059546_1_0_9"/>
<dbReference type="GO" id="GO:0005737">
    <property type="term" value="C:cytoplasm"/>
    <property type="evidence" value="ECO:0007669"/>
    <property type="project" value="UniProtKB-SubCell"/>
</dbReference>
<dbReference type="GO" id="GO:0032299">
    <property type="term" value="C:ribonuclease H2 complex"/>
    <property type="evidence" value="ECO:0007669"/>
    <property type="project" value="TreeGrafter"/>
</dbReference>
<dbReference type="GO" id="GO:0000287">
    <property type="term" value="F:magnesium ion binding"/>
    <property type="evidence" value="ECO:0007669"/>
    <property type="project" value="UniProtKB-UniRule"/>
</dbReference>
<dbReference type="GO" id="GO:0003723">
    <property type="term" value="F:RNA binding"/>
    <property type="evidence" value="ECO:0007669"/>
    <property type="project" value="InterPro"/>
</dbReference>
<dbReference type="GO" id="GO:0004523">
    <property type="term" value="F:RNA-DNA hybrid ribonuclease activity"/>
    <property type="evidence" value="ECO:0007669"/>
    <property type="project" value="UniProtKB-UniRule"/>
</dbReference>
<dbReference type="GO" id="GO:0043137">
    <property type="term" value="P:DNA replication, removal of RNA primer"/>
    <property type="evidence" value="ECO:0007669"/>
    <property type="project" value="TreeGrafter"/>
</dbReference>
<dbReference type="GO" id="GO:0006298">
    <property type="term" value="P:mismatch repair"/>
    <property type="evidence" value="ECO:0007669"/>
    <property type="project" value="TreeGrafter"/>
</dbReference>
<dbReference type="CDD" id="cd06590">
    <property type="entry name" value="RNase_HII_bacteria_HIII_like"/>
    <property type="match status" value="1"/>
</dbReference>
<dbReference type="CDD" id="cd14796">
    <property type="entry name" value="RNAse_HIII_N"/>
    <property type="match status" value="1"/>
</dbReference>
<dbReference type="FunFam" id="3.30.310.10:FF:000016">
    <property type="entry name" value="Ribonuclease HIII"/>
    <property type="match status" value="1"/>
</dbReference>
<dbReference type="FunFam" id="3.30.420.10:FF:000047">
    <property type="entry name" value="Ribonuclease HIII"/>
    <property type="match status" value="1"/>
</dbReference>
<dbReference type="Gene3D" id="3.30.420.10">
    <property type="entry name" value="Ribonuclease H-like superfamily/Ribonuclease H"/>
    <property type="match status" value="1"/>
</dbReference>
<dbReference type="Gene3D" id="3.30.310.10">
    <property type="entry name" value="TATA-Binding Protein"/>
    <property type="match status" value="1"/>
</dbReference>
<dbReference type="HAMAP" id="MF_00053">
    <property type="entry name" value="RNase_HIII"/>
    <property type="match status" value="1"/>
</dbReference>
<dbReference type="InterPro" id="IPR001352">
    <property type="entry name" value="RNase_HII/HIII"/>
</dbReference>
<dbReference type="InterPro" id="IPR024567">
    <property type="entry name" value="RNase_HII/HIII_dom"/>
</dbReference>
<dbReference type="InterPro" id="IPR004641">
    <property type="entry name" value="RNase_HIII"/>
</dbReference>
<dbReference type="InterPro" id="IPR024568">
    <property type="entry name" value="RNase_HIII_N"/>
</dbReference>
<dbReference type="InterPro" id="IPR012337">
    <property type="entry name" value="RNaseH-like_sf"/>
</dbReference>
<dbReference type="InterPro" id="IPR036397">
    <property type="entry name" value="RNaseH_sf"/>
</dbReference>
<dbReference type="InterPro" id="IPR012295">
    <property type="entry name" value="TBP_dom_sf"/>
</dbReference>
<dbReference type="NCBIfam" id="TIGR00716">
    <property type="entry name" value="rnhC"/>
    <property type="match status" value="1"/>
</dbReference>
<dbReference type="PANTHER" id="PTHR10954:SF23">
    <property type="entry name" value="RIBONUCLEASE"/>
    <property type="match status" value="1"/>
</dbReference>
<dbReference type="PANTHER" id="PTHR10954">
    <property type="entry name" value="RIBONUCLEASE H2 SUBUNIT A"/>
    <property type="match status" value="1"/>
</dbReference>
<dbReference type="Pfam" id="PF11858">
    <property type="entry name" value="DUF3378"/>
    <property type="match status" value="1"/>
</dbReference>
<dbReference type="Pfam" id="PF01351">
    <property type="entry name" value="RNase_HII"/>
    <property type="match status" value="1"/>
</dbReference>
<dbReference type="PIRSF" id="PIRSF037748">
    <property type="entry name" value="RnhC"/>
    <property type="match status" value="1"/>
</dbReference>
<dbReference type="SUPFAM" id="SSF53098">
    <property type="entry name" value="Ribonuclease H-like"/>
    <property type="match status" value="1"/>
</dbReference>
<dbReference type="PROSITE" id="PS51975">
    <property type="entry name" value="RNASE_H_2"/>
    <property type="match status" value="1"/>
</dbReference>
<evidence type="ECO:0000255" key="1">
    <source>
        <dbReference type="HAMAP-Rule" id="MF_00053"/>
    </source>
</evidence>
<evidence type="ECO:0000255" key="2">
    <source>
        <dbReference type="PROSITE-ProRule" id="PRU01319"/>
    </source>
</evidence>
<proteinExistence type="inferred from homology"/>
<protein>
    <recommendedName>
        <fullName evidence="1">Ribonuclease HIII</fullName>
        <shortName evidence="1">RNase HIII</shortName>
        <ecNumber evidence="1">3.1.26.4</ecNumber>
    </recommendedName>
</protein>
<keyword id="KW-0963">Cytoplasm</keyword>
<keyword id="KW-0255">Endonuclease</keyword>
<keyword id="KW-0378">Hydrolase</keyword>
<keyword id="KW-0460">Magnesium</keyword>
<keyword id="KW-0479">Metal-binding</keyword>
<keyword id="KW-0540">Nuclease</keyword>
<feature type="chain" id="PRO_1000117699" description="Ribonuclease HIII">
    <location>
        <begin position="1"/>
        <end position="311"/>
    </location>
</feature>
<feature type="domain" description="RNase H type-2" evidence="2">
    <location>
        <begin position="95"/>
        <end position="311"/>
    </location>
</feature>
<feature type="binding site" evidence="1">
    <location>
        <position position="101"/>
    </location>
    <ligand>
        <name>a divalent metal cation</name>
        <dbReference type="ChEBI" id="CHEBI:60240"/>
    </ligand>
</feature>
<feature type="binding site" evidence="1">
    <location>
        <position position="102"/>
    </location>
    <ligand>
        <name>a divalent metal cation</name>
        <dbReference type="ChEBI" id="CHEBI:60240"/>
    </ligand>
</feature>
<feature type="binding site" evidence="1">
    <location>
        <position position="206"/>
    </location>
    <ligand>
        <name>a divalent metal cation</name>
        <dbReference type="ChEBI" id="CHEBI:60240"/>
    </ligand>
</feature>
<organism>
    <name type="scientific">Bacillus anthracis (strain CDC 684 / NRRL 3495)</name>
    <dbReference type="NCBI Taxonomy" id="568206"/>
    <lineage>
        <taxon>Bacteria</taxon>
        <taxon>Bacillati</taxon>
        <taxon>Bacillota</taxon>
        <taxon>Bacilli</taxon>
        <taxon>Bacillales</taxon>
        <taxon>Bacillaceae</taxon>
        <taxon>Bacillus</taxon>
        <taxon>Bacillus cereus group</taxon>
    </lineage>
</organism>
<name>RNH3_BACAC</name>
<gene>
    <name evidence="1" type="primary">rnhC</name>
    <name type="ordered locus">BAMEG_4828</name>
</gene>
<accession>C3L8T2</accession>
<reference key="1">
    <citation type="submission" date="2008-10" db="EMBL/GenBank/DDBJ databases">
        <title>Genome sequence of Bacillus anthracis str. CDC 684.</title>
        <authorList>
            <person name="Dodson R.J."/>
            <person name="Munk A.C."/>
            <person name="Brettin T."/>
            <person name="Bruce D."/>
            <person name="Detter C."/>
            <person name="Tapia R."/>
            <person name="Han C."/>
            <person name="Sutton G."/>
            <person name="Sims D."/>
        </authorList>
    </citation>
    <scope>NUCLEOTIDE SEQUENCE [LARGE SCALE GENOMIC DNA]</scope>
    <source>
        <strain>CDC 684 / NRRL 3495</strain>
    </source>
</reference>